<evidence type="ECO:0000250" key="1"/>
<evidence type="ECO:0000250" key="2">
    <source>
        <dbReference type="UniProtKB" id="Q12136"/>
    </source>
</evidence>
<evidence type="ECO:0000250" key="3">
    <source>
        <dbReference type="UniProtKB" id="Q9JI13"/>
    </source>
</evidence>
<evidence type="ECO:0000256" key="4">
    <source>
        <dbReference type="SAM" id="MobiDB-lite"/>
    </source>
</evidence>
<evidence type="ECO:0000269" key="5">
    <source>
    </source>
</evidence>
<evidence type="ECO:0000305" key="6"/>
<evidence type="ECO:0000312" key="7">
    <source>
        <dbReference type="EMBL" id="AAF91408.1"/>
    </source>
</evidence>
<evidence type="ECO:0000312" key="8">
    <source>
        <dbReference type="EMBL" id="AAH04546.1"/>
    </source>
</evidence>
<evidence type="ECO:0000312" key="9">
    <source>
        <dbReference type="EMBL" id="BAB15588.1"/>
    </source>
</evidence>
<evidence type="ECO:0000312" key="10">
    <source>
        <dbReference type="EMBL" id="CAB66525.1"/>
    </source>
</evidence>
<evidence type="ECO:0000312" key="11">
    <source>
        <dbReference type="HGNC" id="HGNC:24477"/>
    </source>
</evidence>
<evidence type="ECO:0007744" key="12">
    <source>
        <dbReference type="PDB" id="7MQ8"/>
    </source>
</evidence>
<evidence type="ECO:0007744" key="13">
    <source>
        <dbReference type="PDB" id="7MQ9"/>
    </source>
</evidence>
<evidence type="ECO:0007744" key="14">
    <source>
        <dbReference type="PDB" id="7MQA"/>
    </source>
</evidence>
<evidence type="ECO:0007744" key="15">
    <source>
    </source>
</evidence>
<evidence type="ECO:0007744" key="16">
    <source>
    </source>
</evidence>
<evidence type="ECO:0007744" key="17">
    <source>
    </source>
</evidence>
<evidence type="ECO:0007744" key="18">
    <source>
    </source>
</evidence>
<evidence type="ECO:0007744" key="19">
    <source>
    </source>
</evidence>
<evidence type="ECO:0007744" key="20">
    <source>
    </source>
</evidence>
<evidence type="ECO:0007744" key="21">
    <source>
    </source>
</evidence>
<gene>
    <name evidence="11" type="primary">UTP3</name>
    <name type="synonym">CRLZ1</name>
    <name evidence="7" type="synonym">SAS10</name>
</gene>
<proteinExistence type="evidence at protein level"/>
<comment type="function">
    <text evidence="2 3 5">Essential for gene silencing: has a role in the structure of silenced chromatin. Plays a role in the developing brain (By similarity). Part of the small subunit (SSU) processome, first precursor of the small eukaryotic ribosomal subunit. During the assembly of the SSU processome in the nucleolus, many ribosome biogenesis factors, an RNA chaperone and ribosomal proteins associate with the nascent pre-rRNA and work in concert to generate RNA folding, modifications, rearrangements and cleavage as well as targeted degradation of pre-ribosomal RNA by the RNA exosome (PubMed:34516797).</text>
</comment>
<comment type="subunit">
    <text evidence="5">Part of the small subunit (SSU) processome, composed of more than 70 proteins and the RNA chaperone small nucleolar RNA (snoRNA) U3.</text>
</comment>
<comment type="interaction">
    <interactant intactId="EBI-714067">
        <id>Q9NQZ2</id>
    </interactant>
    <interactant intactId="EBI-17761821">
        <id>Q8NDD1-6</id>
        <label>C1orf131</label>
    </interactant>
    <organismsDiffer>false</organismsDiffer>
    <experiments>3</experiments>
</comment>
<comment type="interaction">
    <interactant intactId="EBI-714067">
        <id>Q9NQZ2</id>
    </interactant>
    <interactant intactId="EBI-5278764">
        <id>Q96GN5</id>
        <label>CDCA7L</label>
    </interactant>
    <organismsDiffer>false</organismsDiffer>
    <experiments>3</experiments>
</comment>
<comment type="interaction">
    <interactant intactId="EBI-714067">
        <id>Q9NQZ2</id>
    </interactant>
    <interactant intactId="EBI-739624">
        <id>Q8NHQ1</id>
        <label>CEP70</label>
    </interactant>
    <organismsDiffer>false</organismsDiffer>
    <experiments>3</experiments>
</comment>
<comment type="interaction">
    <interactant intactId="EBI-714067">
        <id>Q9NQZ2</id>
    </interactant>
    <interactant intactId="EBI-739789">
        <id>Q92997</id>
        <label>DVL3</label>
    </interactant>
    <organismsDiffer>false</organismsDiffer>
    <experiments>3</experiments>
</comment>
<comment type="interaction">
    <interactant intactId="EBI-714067">
        <id>Q9NQZ2</id>
    </interactant>
    <interactant intactId="EBI-932603">
        <id>Q02539</id>
        <label>H1-1</label>
    </interactant>
    <organismsDiffer>false</organismsDiffer>
    <experiments>2</experiments>
</comment>
<comment type="interaction">
    <interactant intactId="EBI-714067">
        <id>Q9NQZ2</id>
    </interactant>
    <interactant intactId="EBI-358163">
        <id>P10412</id>
        <label>H1-4</label>
    </interactant>
    <organismsDiffer>false</organismsDiffer>
    <experiments>2</experiments>
</comment>
<comment type="interaction">
    <interactant intactId="EBI-714067">
        <id>Q9NQZ2</id>
    </interactant>
    <interactant intactId="EBI-357966">
        <id>P07910</id>
        <label>HNRNPC</label>
    </interactant>
    <organismsDiffer>false</organismsDiffer>
    <experiments>3</experiments>
</comment>
<comment type="interaction">
    <interactant intactId="EBI-714067">
        <id>Q9NQZ2</id>
    </interactant>
    <interactant intactId="EBI-79165">
        <id>Q9NRD5</id>
        <label>PICK1</label>
    </interactant>
    <organismsDiffer>false</organismsDiffer>
    <experiments>3</experiments>
</comment>
<comment type="subcellular location">
    <subcellularLocation>
        <location evidence="5">Nucleus</location>
        <location evidence="5">Nucleolus</location>
    </subcellularLocation>
</comment>
<comment type="PTM">
    <text evidence="1">Citrullinated by PADI4.</text>
</comment>
<comment type="similarity">
    <text evidence="6">Belongs to the SAS10 family.</text>
</comment>
<accession>Q9NQZ2</accession>
<accession>Q6FI82</accession>
<protein>
    <recommendedName>
        <fullName>Something about silencing protein 10</fullName>
    </recommendedName>
    <alternativeName>
        <fullName>Charged amino acid-rich leucine zipper 1</fullName>
        <shortName>CRL1</shortName>
    </alternativeName>
    <alternativeName>
        <fullName>Disrupter of silencing SAS10</fullName>
    </alternativeName>
    <alternativeName>
        <fullName>UTP3 homolog</fullName>
    </alternativeName>
</protein>
<organism>
    <name type="scientific">Homo sapiens</name>
    <name type="common">Human</name>
    <dbReference type="NCBI Taxonomy" id="9606"/>
    <lineage>
        <taxon>Eukaryota</taxon>
        <taxon>Metazoa</taxon>
        <taxon>Chordata</taxon>
        <taxon>Craniata</taxon>
        <taxon>Vertebrata</taxon>
        <taxon>Euteleostomi</taxon>
        <taxon>Mammalia</taxon>
        <taxon>Eutheria</taxon>
        <taxon>Euarchontoglires</taxon>
        <taxon>Primates</taxon>
        <taxon>Haplorrhini</taxon>
        <taxon>Catarrhini</taxon>
        <taxon>Hominidae</taxon>
        <taxon>Homo</taxon>
    </lineage>
</organism>
<feature type="chain" id="PRO_0000114326" description="Something about silencing protein 10">
    <location>
        <begin position="1"/>
        <end position="479"/>
    </location>
</feature>
<feature type="region of interest" description="Disordered" evidence="4">
    <location>
        <begin position="1"/>
        <end position="45"/>
    </location>
</feature>
<feature type="region of interest" description="Disordered" evidence="4">
    <location>
        <begin position="62"/>
        <end position="166"/>
    </location>
</feature>
<feature type="region of interest" description="Disordered" evidence="4">
    <location>
        <begin position="419"/>
        <end position="466"/>
    </location>
</feature>
<feature type="compositionally biased region" description="Basic residues" evidence="4">
    <location>
        <begin position="1"/>
        <end position="10"/>
    </location>
</feature>
<feature type="compositionally biased region" description="Low complexity" evidence="4">
    <location>
        <begin position="11"/>
        <end position="21"/>
    </location>
</feature>
<feature type="compositionally biased region" description="Acidic residues" evidence="4">
    <location>
        <begin position="69"/>
        <end position="111"/>
    </location>
</feature>
<feature type="compositionally biased region" description="Acidic residues" evidence="4">
    <location>
        <begin position="153"/>
        <end position="165"/>
    </location>
</feature>
<feature type="compositionally biased region" description="Basic residues" evidence="4">
    <location>
        <begin position="422"/>
        <end position="449"/>
    </location>
</feature>
<feature type="compositionally biased region" description="Basic and acidic residues" evidence="4">
    <location>
        <begin position="450"/>
        <end position="461"/>
    </location>
</feature>
<feature type="modified residue" description="Omega-N-methylarginine" evidence="3">
    <location>
        <position position="8"/>
    </location>
</feature>
<feature type="modified residue" description="Phosphoserine" evidence="15 17 18">
    <location>
        <position position="37"/>
    </location>
</feature>
<feature type="modified residue" description="N6-acetyllysine; alternate" evidence="3">
    <location>
        <position position="144"/>
    </location>
</feature>
<feature type="modified residue" description="Phosphoserine" evidence="16 19 20">
    <location>
        <position position="150"/>
    </location>
</feature>
<feature type="modified residue" description="Phosphothreonine" evidence="17">
    <location>
        <position position="362"/>
    </location>
</feature>
<feature type="modified residue" description="Phosphoserine" evidence="15 17 18 19">
    <location>
        <position position="365"/>
    </location>
</feature>
<feature type="modified residue" description="Phosphoserine" evidence="15 17 18 19">
    <location>
        <position position="368"/>
    </location>
</feature>
<feature type="modified residue" description="Citrulline" evidence="1">
    <location>
        <position position="385"/>
    </location>
</feature>
<feature type="cross-link" description="Glycyl lysine isopeptide (Lys-Gly) (interchain with G-Cter in SUMO2); alternate" evidence="21">
    <location>
        <position position="144"/>
    </location>
</feature>
<feature type="sequence variant" id="VAR_051897" description="In dbSNP:rs16845385.">
    <original>T</original>
    <variation>M</variation>
    <location>
        <position position="23"/>
    </location>
</feature>
<feature type="sequence conflict" description="In Ref. 3; CAG38575." evidence="6" ref="3">
    <original>D</original>
    <variation>G</variation>
    <location>
        <position position="109"/>
    </location>
</feature>
<sequence>MVGRSRRRGAAKWAAVRAKAGPTLTDENGDDLGLPPSPGDTSYYQDQVDDFHEARSRAALAKGWNEVQSGDEEDGEEEEEEVLALDMDDEDDEDGGNAGEEEEEENADDDGGSSVQSEAEASVDPSLSWGQRKKLYYDTDYGSKSRGRQSQQEAEEEEREEEEEAQIIQRRLAQALQEDDFGVAWVEAFAKPVPQVDEAETRVVKDLAKVSVKEKLKMLRKESPELLELIEDLKVKLTEVKDELEPLLELVEQGIIPPGKGSQYLRTKYNLYLNYCSNISFYLILKARRVPAHGHPVIERLVTYRNLINKLSVVDQKLSSEIRHLLTLKDDAVKKELIPKAKSTKPKPKSVSKTSAAACAVTDLSDDSDFDEKAKLKYYKEIEDRQKLKRKKEENSTEEQALEDQNAKRAITYQIAKNRGLTPRRKKIDRNPRVKHREKFRRAKIRRRGQVREVRKEEQRYSGELSGIRAGVKKSIKLK</sequence>
<dbReference type="EMBL" id="AF271212">
    <property type="protein sequence ID" value="AAF91408.1"/>
    <property type="molecule type" value="mRNA"/>
</dbReference>
<dbReference type="EMBL" id="AL136590">
    <property type="protein sequence ID" value="CAB66525.1"/>
    <property type="molecule type" value="mRNA"/>
</dbReference>
<dbReference type="EMBL" id="CR533544">
    <property type="protein sequence ID" value="CAG38575.1"/>
    <property type="molecule type" value="mRNA"/>
</dbReference>
<dbReference type="EMBL" id="AK026909">
    <property type="protein sequence ID" value="BAB15588.1"/>
    <property type="molecule type" value="mRNA"/>
</dbReference>
<dbReference type="EMBL" id="BC004546">
    <property type="protein sequence ID" value="AAH04546.1"/>
    <property type="molecule type" value="mRNA"/>
</dbReference>
<dbReference type="CCDS" id="CCDS3546.1"/>
<dbReference type="RefSeq" id="NP_065101.1">
    <property type="nucleotide sequence ID" value="NM_020368.3"/>
</dbReference>
<dbReference type="PDB" id="7MQ8">
    <property type="method" value="EM"/>
    <property type="resolution" value="3.60 A"/>
    <property type="chains" value="NB=1-479"/>
</dbReference>
<dbReference type="PDB" id="7MQ9">
    <property type="method" value="EM"/>
    <property type="resolution" value="3.87 A"/>
    <property type="chains" value="NB=1-479"/>
</dbReference>
<dbReference type="PDB" id="7MQA">
    <property type="method" value="EM"/>
    <property type="resolution" value="2.70 A"/>
    <property type="chains" value="NB=1-479"/>
</dbReference>
<dbReference type="PDBsum" id="7MQ8"/>
<dbReference type="PDBsum" id="7MQ9"/>
<dbReference type="PDBsum" id="7MQA"/>
<dbReference type="EMDB" id="EMD-23936"/>
<dbReference type="EMDB" id="EMD-23937"/>
<dbReference type="EMDB" id="EMD-23938"/>
<dbReference type="SMR" id="Q9NQZ2"/>
<dbReference type="BioGRID" id="121342">
    <property type="interactions" value="179"/>
</dbReference>
<dbReference type="ComplexPortal" id="CPX-2511">
    <property type="entry name" value="Small ribosomal subunit processome"/>
</dbReference>
<dbReference type="FunCoup" id="Q9NQZ2">
    <property type="interactions" value="3443"/>
</dbReference>
<dbReference type="IntAct" id="Q9NQZ2">
    <property type="interactions" value="242"/>
</dbReference>
<dbReference type="MINT" id="Q9NQZ2"/>
<dbReference type="STRING" id="9606.ENSP00000254803"/>
<dbReference type="iPTMnet" id="Q9NQZ2"/>
<dbReference type="PhosphoSitePlus" id="Q9NQZ2"/>
<dbReference type="SwissPalm" id="Q9NQZ2"/>
<dbReference type="BioMuta" id="UTP3"/>
<dbReference type="DMDM" id="76364208"/>
<dbReference type="jPOST" id="Q9NQZ2"/>
<dbReference type="MassIVE" id="Q9NQZ2"/>
<dbReference type="PaxDb" id="9606-ENSP00000254803"/>
<dbReference type="PeptideAtlas" id="Q9NQZ2"/>
<dbReference type="ProteomicsDB" id="82231"/>
<dbReference type="Pumba" id="Q9NQZ2"/>
<dbReference type="Antibodypedia" id="24355">
    <property type="antibodies" value="131 antibodies from 23 providers"/>
</dbReference>
<dbReference type="DNASU" id="57050"/>
<dbReference type="Ensembl" id="ENST00000254803.4">
    <property type="protein sequence ID" value="ENSP00000254803.2"/>
    <property type="gene ID" value="ENSG00000132467.4"/>
</dbReference>
<dbReference type="GeneID" id="57050"/>
<dbReference type="KEGG" id="hsa:57050"/>
<dbReference type="MANE-Select" id="ENST00000254803.4">
    <property type="protein sequence ID" value="ENSP00000254803.2"/>
    <property type="RefSeq nucleotide sequence ID" value="NM_020368.3"/>
    <property type="RefSeq protein sequence ID" value="NP_065101.1"/>
</dbReference>
<dbReference type="UCSC" id="uc003hfo.3">
    <property type="organism name" value="human"/>
</dbReference>
<dbReference type="AGR" id="HGNC:24477"/>
<dbReference type="CTD" id="57050"/>
<dbReference type="DisGeNET" id="57050"/>
<dbReference type="GeneCards" id="UTP3"/>
<dbReference type="HGNC" id="HGNC:24477">
    <property type="gene designation" value="UTP3"/>
</dbReference>
<dbReference type="HPA" id="ENSG00000132467">
    <property type="expression patterns" value="Low tissue specificity"/>
</dbReference>
<dbReference type="MIM" id="611614">
    <property type="type" value="gene"/>
</dbReference>
<dbReference type="neXtProt" id="NX_Q9NQZ2"/>
<dbReference type="OpenTargets" id="ENSG00000132467"/>
<dbReference type="PharmGKB" id="PA162408779"/>
<dbReference type="VEuPathDB" id="HostDB:ENSG00000132467"/>
<dbReference type="eggNOG" id="KOG3118">
    <property type="taxonomic scope" value="Eukaryota"/>
</dbReference>
<dbReference type="GeneTree" id="ENSGT00500000044947"/>
<dbReference type="HOGENOM" id="CLU_025161_1_0_1"/>
<dbReference type="InParanoid" id="Q9NQZ2"/>
<dbReference type="OMA" id="EEYIRPQ"/>
<dbReference type="OrthoDB" id="1924577at2759"/>
<dbReference type="PAN-GO" id="Q9NQZ2">
    <property type="GO annotations" value="3 GO annotations based on evolutionary models"/>
</dbReference>
<dbReference type="PhylomeDB" id="Q9NQZ2"/>
<dbReference type="TreeFam" id="TF315177"/>
<dbReference type="PathwayCommons" id="Q9NQZ2"/>
<dbReference type="Reactome" id="R-HSA-6790901">
    <property type="pathway name" value="rRNA modification in the nucleus and cytosol"/>
</dbReference>
<dbReference type="Reactome" id="R-HSA-6791226">
    <property type="pathway name" value="Major pathway of rRNA processing in the nucleolus and cytosol"/>
</dbReference>
<dbReference type="SignaLink" id="Q9NQZ2"/>
<dbReference type="SIGNOR" id="Q9NQZ2"/>
<dbReference type="BioGRID-ORCS" id="57050">
    <property type="hits" value="509 hits in 1161 CRISPR screens"/>
</dbReference>
<dbReference type="CD-CODE" id="91857CE7">
    <property type="entry name" value="Nucleolus"/>
</dbReference>
<dbReference type="ChiTaRS" id="UTP3">
    <property type="organism name" value="human"/>
</dbReference>
<dbReference type="GeneWiki" id="UTP3"/>
<dbReference type="GenomeRNAi" id="57050"/>
<dbReference type="Pharos" id="Q9NQZ2">
    <property type="development level" value="Tbio"/>
</dbReference>
<dbReference type="PRO" id="PR:Q9NQZ2"/>
<dbReference type="Proteomes" id="UP000005640">
    <property type="component" value="Chromosome 4"/>
</dbReference>
<dbReference type="RNAct" id="Q9NQZ2">
    <property type="molecule type" value="protein"/>
</dbReference>
<dbReference type="Bgee" id="ENSG00000132467">
    <property type="expression patterns" value="Expressed in parietal pleura and 207 other cell types or tissues"/>
</dbReference>
<dbReference type="GO" id="GO:0005730">
    <property type="term" value="C:nucleolus"/>
    <property type="evidence" value="ECO:0000314"/>
    <property type="project" value="LIFEdb"/>
</dbReference>
<dbReference type="GO" id="GO:0005654">
    <property type="term" value="C:nucleoplasm"/>
    <property type="evidence" value="ECO:0000304"/>
    <property type="project" value="Reactome"/>
</dbReference>
<dbReference type="GO" id="GO:0005634">
    <property type="term" value="C:nucleus"/>
    <property type="evidence" value="ECO:0000250"/>
    <property type="project" value="UniProtKB"/>
</dbReference>
<dbReference type="GO" id="GO:0032040">
    <property type="term" value="C:small-subunit processome"/>
    <property type="evidence" value="ECO:0000314"/>
    <property type="project" value="UniProtKB"/>
</dbReference>
<dbReference type="GO" id="GO:0003723">
    <property type="term" value="F:RNA binding"/>
    <property type="evidence" value="ECO:0007005"/>
    <property type="project" value="UniProtKB"/>
</dbReference>
<dbReference type="GO" id="GO:0007420">
    <property type="term" value="P:brain development"/>
    <property type="evidence" value="ECO:0000250"/>
    <property type="project" value="UniProtKB"/>
</dbReference>
<dbReference type="GO" id="GO:0006325">
    <property type="term" value="P:chromatin organization"/>
    <property type="evidence" value="ECO:0007669"/>
    <property type="project" value="UniProtKB-KW"/>
</dbReference>
<dbReference type="GO" id="GO:0000462">
    <property type="term" value="P:maturation of SSU-rRNA from tricistronic rRNA transcript (SSU-rRNA, 5.8S rRNA, LSU-rRNA)"/>
    <property type="evidence" value="ECO:0000318"/>
    <property type="project" value="GO_Central"/>
</dbReference>
<dbReference type="GO" id="GO:0042274">
    <property type="term" value="P:ribosomal small subunit biogenesis"/>
    <property type="evidence" value="ECO:0000314"/>
    <property type="project" value="UniProtKB"/>
</dbReference>
<dbReference type="InterPro" id="IPR007146">
    <property type="entry name" value="Sas10/Utp3/C1D"/>
</dbReference>
<dbReference type="InterPro" id="IPR018972">
    <property type="entry name" value="Sas10_C_dom"/>
</dbReference>
<dbReference type="PANTHER" id="PTHR13237:SF8">
    <property type="entry name" value="SOMETHING ABOUT SILENCING PROTEIN 10"/>
    <property type="match status" value="1"/>
</dbReference>
<dbReference type="PANTHER" id="PTHR13237">
    <property type="entry name" value="SOMETHING ABOUT SILENCING PROTEIN 10-RELATED"/>
    <property type="match status" value="1"/>
</dbReference>
<dbReference type="Pfam" id="PF09368">
    <property type="entry name" value="Sas10"/>
    <property type="match status" value="1"/>
</dbReference>
<dbReference type="Pfam" id="PF04000">
    <property type="entry name" value="Sas10_Utp3"/>
    <property type="match status" value="1"/>
</dbReference>
<name>SAS10_HUMAN</name>
<keyword id="KW-0002">3D-structure</keyword>
<keyword id="KW-0007">Acetylation</keyword>
<keyword id="KW-0156">Chromatin regulator</keyword>
<keyword id="KW-0164">Citrullination</keyword>
<keyword id="KW-0217">Developmental protein</keyword>
<keyword id="KW-1017">Isopeptide bond</keyword>
<keyword id="KW-0488">Methylation</keyword>
<keyword id="KW-0539">Nucleus</keyword>
<keyword id="KW-0597">Phosphoprotein</keyword>
<keyword id="KW-1267">Proteomics identification</keyword>
<keyword id="KW-1185">Reference proteome</keyword>
<keyword id="KW-0832">Ubl conjugation</keyword>
<reference evidence="7" key="1">
    <citation type="submission" date="2000-05" db="EMBL/GenBank/DDBJ databases">
        <title>Human and mouse homologs of yeast SAS10 disrupter of silencing gene.</title>
        <authorList>
            <person name="Frye R.A."/>
        </authorList>
    </citation>
    <scope>NUCLEOTIDE SEQUENCE [MRNA]</scope>
    <source>
        <tissue evidence="7">Spleen</tissue>
    </source>
</reference>
<reference evidence="10" key="2">
    <citation type="journal article" date="2001" name="Genome Res.">
        <title>Towards a catalog of human genes and proteins: sequencing and analysis of 500 novel complete protein coding human cDNAs.</title>
        <authorList>
            <person name="Wiemann S."/>
            <person name="Weil B."/>
            <person name="Wellenreuther R."/>
            <person name="Gassenhuber J."/>
            <person name="Glassl S."/>
            <person name="Ansorge W."/>
            <person name="Boecher M."/>
            <person name="Bloecker H."/>
            <person name="Bauersachs S."/>
            <person name="Blum H."/>
            <person name="Lauber J."/>
            <person name="Duesterhoeft A."/>
            <person name="Beyer A."/>
            <person name="Koehrer K."/>
            <person name="Strack N."/>
            <person name="Mewes H.-W."/>
            <person name="Ottenwaelder B."/>
            <person name="Obermaier B."/>
            <person name="Tampe J."/>
            <person name="Heubner D."/>
            <person name="Wambutt R."/>
            <person name="Korn B."/>
            <person name="Klein M."/>
            <person name="Poustka A."/>
        </authorList>
    </citation>
    <scope>NUCLEOTIDE SEQUENCE [LARGE SCALE MRNA]</scope>
    <source>
        <tissue evidence="10">Amygdala</tissue>
    </source>
</reference>
<reference evidence="7" key="3">
    <citation type="submission" date="2004-06" db="EMBL/GenBank/DDBJ databases">
        <title>Cloning of human full open reading frames in Gateway(TM) system entry vector (pDONR201).</title>
        <authorList>
            <person name="Ebert L."/>
            <person name="Schick M."/>
            <person name="Neubert P."/>
            <person name="Schatten R."/>
            <person name="Henze S."/>
            <person name="Korn B."/>
        </authorList>
    </citation>
    <scope>NUCLEOTIDE SEQUENCE [LARGE SCALE MRNA]</scope>
</reference>
<reference evidence="6 9" key="4">
    <citation type="journal article" date="2004" name="Nat. Genet.">
        <title>Complete sequencing and characterization of 21,243 full-length human cDNAs.</title>
        <authorList>
            <person name="Ota T."/>
            <person name="Suzuki Y."/>
            <person name="Nishikawa T."/>
            <person name="Otsuki T."/>
            <person name="Sugiyama T."/>
            <person name="Irie R."/>
            <person name="Wakamatsu A."/>
            <person name="Hayashi K."/>
            <person name="Sato H."/>
            <person name="Nagai K."/>
            <person name="Kimura K."/>
            <person name="Makita H."/>
            <person name="Sekine M."/>
            <person name="Obayashi M."/>
            <person name="Nishi T."/>
            <person name="Shibahara T."/>
            <person name="Tanaka T."/>
            <person name="Ishii S."/>
            <person name="Yamamoto J."/>
            <person name="Saito K."/>
            <person name="Kawai Y."/>
            <person name="Isono Y."/>
            <person name="Nakamura Y."/>
            <person name="Nagahari K."/>
            <person name="Murakami K."/>
            <person name="Yasuda T."/>
            <person name="Iwayanagi T."/>
            <person name="Wagatsuma M."/>
            <person name="Shiratori A."/>
            <person name="Sudo H."/>
            <person name="Hosoiri T."/>
            <person name="Kaku Y."/>
            <person name="Kodaira H."/>
            <person name="Kondo H."/>
            <person name="Sugawara M."/>
            <person name="Takahashi M."/>
            <person name="Kanda K."/>
            <person name="Yokoi T."/>
            <person name="Furuya T."/>
            <person name="Kikkawa E."/>
            <person name="Omura Y."/>
            <person name="Abe K."/>
            <person name="Kamihara K."/>
            <person name="Katsuta N."/>
            <person name="Sato K."/>
            <person name="Tanikawa M."/>
            <person name="Yamazaki M."/>
            <person name="Ninomiya K."/>
            <person name="Ishibashi T."/>
            <person name="Yamashita H."/>
            <person name="Murakawa K."/>
            <person name="Fujimori K."/>
            <person name="Tanai H."/>
            <person name="Kimata M."/>
            <person name="Watanabe M."/>
            <person name="Hiraoka S."/>
            <person name="Chiba Y."/>
            <person name="Ishida S."/>
            <person name="Ono Y."/>
            <person name="Takiguchi S."/>
            <person name="Watanabe S."/>
            <person name="Yosida M."/>
            <person name="Hotuta T."/>
            <person name="Kusano J."/>
            <person name="Kanehori K."/>
            <person name="Takahashi-Fujii A."/>
            <person name="Hara H."/>
            <person name="Tanase T.-O."/>
            <person name="Nomura Y."/>
            <person name="Togiya S."/>
            <person name="Komai F."/>
            <person name="Hara R."/>
            <person name="Takeuchi K."/>
            <person name="Arita M."/>
            <person name="Imose N."/>
            <person name="Musashino K."/>
            <person name="Yuuki H."/>
            <person name="Oshima A."/>
            <person name="Sasaki N."/>
            <person name="Aotsuka S."/>
            <person name="Yoshikawa Y."/>
            <person name="Matsunawa H."/>
            <person name="Ichihara T."/>
            <person name="Shiohata N."/>
            <person name="Sano S."/>
            <person name="Moriya S."/>
            <person name="Momiyama H."/>
            <person name="Satoh N."/>
            <person name="Takami S."/>
            <person name="Terashima Y."/>
            <person name="Suzuki O."/>
            <person name="Nakagawa S."/>
            <person name="Senoh A."/>
            <person name="Mizoguchi H."/>
            <person name="Goto Y."/>
            <person name="Shimizu F."/>
            <person name="Wakebe H."/>
            <person name="Hishigaki H."/>
            <person name="Watanabe T."/>
            <person name="Sugiyama A."/>
            <person name="Takemoto M."/>
            <person name="Kawakami B."/>
            <person name="Yamazaki M."/>
            <person name="Watanabe K."/>
            <person name="Kumagai A."/>
            <person name="Itakura S."/>
            <person name="Fukuzumi Y."/>
            <person name="Fujimori Y."/>
            <person name="Komiyama M."/>
            <person name="Tashiro H."/>
            <person name="Tanigami A."/>
            <person name="Fujiwara T."/>
            <person name="Ono T."/>
            <person name="Yamada K."/>
            <person name="Fujii Y."/>
            <person name="Ozaki K."/>
            <person name="Hirao M."/>
            <person name="Ohmori Y."/>
            <person name="Kawabata A."/>
            <person name="Hikiji T."/>
            <person name="Kobatake N."/>
            <person name="Inagaki H."/>
            <person name="Ikema Y."/>
            <person name="Okamoto S."/>
            <person name="Okitani R."/>
            <person name="Kawakami T."/>
            <person name="Noguchi S."/>
            <person name="Itoh T."/>
            <person name="Shigeta K."/>
            <person name="Senba T."/>
            <person name="Matsumura K."/>
            <person name="Nakajima Y."/>
            <person name="Mizuno T."/>
            <person name="Morinaga M."/>
            <person name="Sasaki M."/>
            <person name="Togashi T."/>
            <person name="Oyama M."/>
            <person name="Hata H."/>
            <person name="Watanabe M."/>
            <person name="Komatsu T."/>
            <person name="Mizushima-Sugano J."/>
            <person name="Satoh T."/>
            <person name="Shirai Y."/>
            <person name="Takahashi Y."/>
            <person name="Nakagawa K."/>
            <person name="Okumura K."/>
            <person name="Nagase T."/>
            <person name="Nomura N."/>
            <person name="Kikuchi H."/>
            <person name="Masuho Y."/>
            <person name="Yamashita R."/>
            <person name="Nakai K."/>
            <person name="Yada T."/>
            <person name="Nakamura Y."/>
            <person name="Ohara O."/>
            <person name="Isogai T."/>
            <person name="Sugano S."/>
        </authorList>
    </citation>
    <scope>NUCLEOTIDE SEQUENCE [LARGE SCALE MRNA]</scope>
    <source>
        <tissue evidence="9">Colon</tissue>
    </source>
</reference>
<reference evidence="6 8" key="5">
    <citation type="journal article" date="2004" name="Genome Res.">
        <title>The status, quality, and expansion of the NIH full-length cDNA project: the Mammalian Gene Collection (MGC).</title>
        <authorList>
            <consortium name="The MGC Project Team"/>
        </authorList>
    </citation>
    <scope>NUCLEOTIDE SEQUENCE [LARGE SCALE MRNA]</scope>
    <source>
        <tissue evidence="8">Lung</tissue>
    </source>
</reference>
<reference key="6">
    <citation type="journal article" date="2006" name="Cell">
        <title>Global, in vivo, and site-specific phosphorylation dynamics in signaling networks.</title>
        <authorList>
            <person name="Olsen J.V."/>
            <person name="Blagoev B."/>
            <person name="Gnad F."/>
            <person name="Macek B."/>
            <person name="Kumar C."/>
            <person name="Mortensen P."/>
            <person name="Mann M."/>
        </authorList>
    </citation>
    <scope>PHOSPHORYLATION [LARGE SCALE ANALYSIS] AT SER-37; SER-365 AND SER-368</scope>
    <scope>IDENTIFICATION BY MASS SPECTROMETRY [LARGE SCALE ANALYSIS]</scope>
    <source>
        <tissue>Cervix carcinoma</tissue>
    </source>
</reference>
<reference key="7">
    <citation type="journal article" date="2006" name="Nat. Biotechnol.">
        <title>A probability-based approach for high-throughput protein phosphorylation analysis and site localization.</title>
        <authorList>
            <person name="Beausoleil S.A."/>
            <person name="Villen J."/>
            <person name="Gerber S.A."/>
            <person name="Rush J."/>
            <person name="Gygi S.P."/>
        </authorList>
    </citation>
    <scope>IDENTIFICATION BY MASS SPECTROMETRY [LARGE SCALE ANALYSIS]</scope>
    <source>
        <tissue>Cervix carcinoma</tissue>
    </source>
</reference>
<reference key="8">
    <citation type="journal article" date="2007" name="Science">
        <title>ATM and ATR substrate analysis reveals extensive protein networks responsive to DNA damage.</title>
        <authorList>
            <person name="Matsuoka S."/>
            <person name="Ballif B.A."/>
            <person name="Smogorzewska A."/>
            <person name="McDonald E.R. III"/>
            <person name="Hurov K.E."/>
            <person name="Luo J."/>
            <person name="Bakalarski C.E."/>
            <person name="Zhao Z."/>
            <person name="Solimini N."/>
            <person name="Lerenthal Y."/>
            <person name="Shiloh Y."/>
            <person name="Gygi S.P."/>
            <person name="Elledge S.J."/>
        </authorList>
    </citation>
    <scope>PHOSPHORYLATION [LARGE SCALE ANALYSIS] AT SER-150</scope>
    <scope>IDENTIFICATION BY MASS SPECTROMETRY [LARGE SCALE ANALYSIS]</scope>
    <source>
        <tissue>Embryonic kidney</tissue>
    </source>
</reference>
<reference key="9">
    <citation type="journal article" date="2008" name="Proc. Natl. Acad. Sci. U.S.A.">
        <title>A quantitative atlas of mitotic phosphorylation.</title>
        <authorList>
            <person name="Dephoure N."/>
            <person name="Zhou C."/>
            <person name="Villen J."/>
            <person name="Beausoleil S.A."/>
            <person name="Bakalarski C.E."/>
            <person name="Elledge S.J."/>
            <person name="Gygi S.P."/>
        </authorList>
    </citation>
    <scope>PHOSPHORYLATION [LARGE SCALE ANALYSIS] AT SER-37; THR-362; SER-365 AND SER-368</scope>
    <scope>IDENTIFICATION BY MASS SPECTROMETRY [LARGE SCALE ANALYSIS]</scope>
    <source>
        <tissue>Cervix carcinoma</tissue>
    </source>
</reference>
<reference key="10">
    <citation type="journal article" date="2009" name="Anal. Chem.">
        <title>Lys-N and trypsin cover complementary parts of the phosphoproteome in a refined SCX-based approach.</title>
        <authorList>
            <person name="Gauci S."/>
            <person name="Helbig A.O."/>
            <person name="Slijper M."/>
            <person name="Krijgsveld J."/>
            <person name="Heck A.J."/>
            <person name="Mohammed S."/>
        </authorList>
    </citation>
    <scope>IDENTIFICATION BY MASS SPECTROMETRY [LARGE SCALE ANALYSIS]</scope>
</reference>
<reference key="11">
    <citation type="journal article" date="2009" name="Sci. Signal.">
        <title>Quantitative phosphoproteomic analysis of T cell receptor signaling reveals system-wide modulation of protein-protein interactions.</title>
        <authorList>
            <person name="Mayya V."/>
            <person name="Lundgren D.H."/>
            <person name="Hwang S.-I."/>
            <person name="Rezaul K."/>
            <person name="Wu L."/>
            <person name="Eng J.K."/>
            <person name="Rodionov V."/>
            <person name="Han D.K."/>
        </authorList>
    </citation>
    <scope>PHOSPHORYLATION [LARGE SCALE ANALYSIS] AT SER-37; SER-365 AND SER-368</scope>
    <scope>IDENTIFICATION BY MASS SPECTROMETRY [LARGE SCALE ANALYSIS]</scope>
    <source>
        <tissue>Leukemic T-cell</tissue>
    </source>
</reference>
<reference key="12">
    <citation type="journal article" date="2011" name="Sci. Signal.">
        <title>System-wide temporal characterization of the proteome and phosphoproteome of human embryonic stem cell differentiation.</title>
        <authorList>
            <person name="Rigbolt K.T."/>
            <person name="Prokhorova T.A."/>
            <person name="Akimov V."/>
            <person name="Henningsen J."/>
            <person name="Johansen P.T."/>
            <person name="Kratchmarova I."/>
            <person name="Kassem M."/>
            <person name="Mann M."/>
            <person name="Olsen J.V."/>
            <person name="Blagoev B."/>
        </authorList>
    </citation>
    <scope>PHOSPHORYLATION [LARGE SCALE ANALYSIS] AT SER-150; SER-365 AND SER-368</scope>
    <scope>IDENTIFICATION BY MASS SPECTROMETRY [LARGE SCALE ANALYSIS]</scope>
</reference>
<reference key="13">
    <citation type="journal article" date="2013" name="J. Proteome Res.">
        <title>Toward a comprehensive characterization of a human cancer cell phosphoproteome.</title>
        <authorList>
            <person name="Zhou H."/>
            <person name="Di Palma S."/>
            <person name="Preisinger C."/>
            <person name="Peng M."/>
            <person name="Polat A.N."/>
            <person name="Heck A.J."/>
            <person name="Mohammed S."/>
        </authorList>
    </citation>
    <scope>PHOSPHORYLATION [LARGE SCALE ANALYSIS] AT SER-150</scope>
    <scope>IDENTIFICATION BY MASS SPECTROMETRY [LARGE SCALE ANALYSIS]</scope>
    <source>
        <tissue>Cervix carcinoma</tissue>
        <tissue>Erythroleukemia</tissue>
    </source>
</reference>
<reference key="14">
    <citation type="journal article" date="2017" name="Nat. Struct. Mol. Biol.">
        <title>Site-specific mapping of the human SUMO proteome reveals co-modification with phosphorylation.</title>
        <authorList>
            <person name="Hendriks I.A."/>
            <person name="Lyon D."/>
            <person name="Young C."/>
            <person name="Jensen L.J."/>
            <person name="Vertegaal A.C."/>
            <person name="Nielsen M.L."/>
        </authorList>
    </citation>
    <scope>SUMOYLATION [LARGE SCALE ANALYSIS] AT LYS-144</scope>
    <scope>IDENTIFICATION BY MASS SPECTROMETRY [LARGE SCALE ANALYSIS]</scope>
</reference>
<reference evidence="12 13 14" key="15">
    <citation type="journal article" date="2021" name="Science">
        <title>Nucleolar maturation of the human small subunit processome.</title>
        <authorList>
            <person name="Singh S."/>
            <person name="Vanden Broeck A."/>
            <person name="Miller L."/>
            <person name="Chaker-Margot M."/>
            <person name="Klinge S."/>
        </authorList>
    </citation>
    <scope>STRUCTURE BY ELECTRON MICROSCOPY (2.70 ANGSTROMS)</scope>
    <scope>FUNCTION</scope>
    <scope>SUBUNIT</scope>
    <scope>SUBCELLULAR LOCATION</scope>
</reference>